<accession>A9WW03</accession>
<keyword id="KW-0997">Cell inner membrane</keyword>
<keyword id="KW-1003">Cell membrane</keyword>
<keyword id="KW-0249">Electron transport</keyword>
<keyword id="KW-0285">Flavoprotein</keyword>
<keyword id="KW-0288">FMN</keyword>
<keyword id="KW-0349">Heme</keyword>
<keyword id="KW-0408">Iron</keyword>
<keyword id="KW-0472">Membrane</keyword>
<keyword id="KW-0479">Metal-binding</keyword>
<keyword id="KW-0812">Transmembrane</keyword>
<keyword id="KW-1133">Transmembrane helix</keyword>
<keyword id="KW-0813">Transport</keyword>
<reference key="1">
    <citation type="submission" date="2007-12" db="EMBL/GenBank/DDBJ databases">
        <title>Brucella suis ATCC 23445 whole genome shotgun sequencing project.</title>
        <authorList>
            <person name="Setubal J.C."/>
            <person name="Bowns C."/>
            <person name="Boyle S."/>
            <person name="Crasta O.R."/>
            <person name="Czar M.J."/>
            <person name="Dharmanolla C."/>
            <person name="Gillespie J.J."/>
            <person name="Kenyon R.W."/>
            <person name="Lu J."/>
            <person name="Mane S."/>
            <person name="Mohapatra S."/>
            <person name="Nagrani S."/>
            <person name="Purkayastha A."/>
            <person name="Rajasimha H.K."/>
            <person name="Shallom J.M."/>
            <person name="Shallom S."/>
            <person name="Shukla M."/>
            <person name="Snyder E.E."/>
            <person name="Sobral B.W."/>
            <person name="Wattam A.R."/>
            <person name="Will R."/>
            <person name="Williams K."/>
            <person name="Yoo H."/>
            <person name="Bruce D."/>
            <person name="Detter C."/>
            <person name="Munk C."/>
            <person name="Brettin T.S."/>
        </authorList>
    </citation>
    <scope>NUCLEOTIDE SEQUENCE [LARGE SCALE GENOMIC DNA]</scope>
    <source>
        <strain>ATCC 23445 / NCTC 10510</strain>
    </source>
</reference>
<comment type="function">
    <text evidence="1">Part of the MsrPQ system that repairs oxidized periplasmic proteins containing methionine sulfoxide residues (Met-O), using respiratory chain electrons. Thus protects these proteins from oxidative-stress damage caused by reactive species of oxygen and chlorine generated by the host defense mechanisms. MsrPQ is essential for the maintenance of envelope integrity under bleach stress, rescuing a wide series of structurally unrelated periplasmic proteins from methionine oxidation. MsrQ provides electrons for reduction to the reductase catalytic subunit MsrP, using the quinone pool of the respiratory chain.</text>
</comment>
<comment type="cofactor">
    <cofactor evidence="1">
        <name>FMN</name>
        <dbReference type="ChEBI" id="CHEBI:58210"/>
    </cofactor>
    <text evidence="1">Binds 1 FMN per subunit.</text>
</comment>
<comment type="cofactor">
    <cofactor evidence="1">
        <name>heme b</name>
        <dbReference type="ChEBI" id="CHEBI:60344"/>
    </cofactor>
    <text evidence="1">Binds 1 heme b (iron(II)-protoporphyrin IX) group per subunit.</text>
</comment>
<comment type="subunit">
    <text evidence="1">Heterodimer of a catalytic subunit (MsrP) and a heme-binding subunit (MsrQ).</text>
</comment>
<comment type="subcellular location">
    <subcellularLocation>
        <location evidence="1">Cell inner membrane</location>
        <topology evidence="1">Multi-pass membrane protein</topology>
    </subcellularLocation>
</comment>
<comment type="similarity">
    <text evidence="1">Belongs to the MsrQ family.</text>
</comment>
<organism>
    <name type="scientific">Brucella suis (strain ATCC 23445 / NCTC 10510)</name>
    <dbReference type="NCBI Taxonomy" id="470137"/>
    <lineage>
        <taxon>Bacteria</taxon>
        <taxon>Pseudomonadati</taxon>
        <taxon>Pseudomonadota</taxon>
        <taxon>Alphaproteobacteria</taxon>
        <taxon>Hyphomicrobiales</taxon>
        <taxon>Brucellaceae</taxon>
        <taxon>Brucella/Ochrobactrum group</taxon>
        <taxon>Brucella</taxon>
    </lineage>
</organism>
<gene>
    <name evidence="1" type="primary">msrQ</name>
    <name type="ordered locus">BSUIS_B0986</name>
</gene>
<name>MSRQ_BRUSI</name>
<proteinExistence type="inferred from homology"/>
<dbReference type="EMBL" id="CP000912">
    <property type="protein sequence ID" value="ABY39939.1"/>
    <property type="molecule type" value="Genomic_DNA"/>
</dbReference>
<dbReference type="RefSeq" id="WP_002965660.1">
    <property type="nucleotide sequence ID" value="NC_010167.1"/>
</dbReference>
<dbReference type="SMR" id="A9WW03"/>
<dbReference type="GeneID" id="93015803"/>
<dbReference type="KEGG" id="bmt:BSUIS_B0986"/>
<dbReference type="HOGENOM" id="CLU_080662_2_0_5"/>
<dbReference type="Proteomes" id="UP000008545">
    <property type="component" value="Chromosome II"/>
</dbReference>
<dbReference type="GO" id="GO:0005886">
    <property type="term" value="C:plasma membrane"/>
    <property type="evidence" value="ECO:0007669"/>
    <property type="project" value="UniProtKB-SubCell"/>
</dbReference>
<dbReference type="GO" id="GO:0009055">
    <property type="term" value="F:electron transfer activity"/>
    <property type="evidence" value="ECO:0007669"/>
    <property type="project" value="UniProtKB-UniRule"/>
</dbReference>
<dbReference type="GO" id="GO:0010181">
    <property type="term" value="F:FMN binding"/>
    <property type="evidence" value="ECO:0007669"/>
    <property type="project" value="UniProtKB-UniRule"/>
</dbReference>
<dbReference type="GO" id="GO:0020037">
    <property type="term" value="F:heme binding"/>
    <property type="evidence" value="ECO:0007669"/>
    <property type="project" value="UniProtKB-UniRule"/>
</dbReference>
<dbReference type="GO" id="GO:0046872">
    <property type="term" value="F:metal ion binding"/>
    <property type="evidence" value="ECO:0007669"/>
    <property type="project" value="UniProtKB-KW"/>
</dbReference>
<dbReference type="GO" id="GO:0016679">
    <property type="term" value="F:oxidoreductase activity, acting on diphenols and related substances as donors"/>
    <property type="evidence" value="ECO:0007669"/>
    <property type="project" value="TreeGrafter"/>
</dbReference>
<dbReference type="GO" id="GO:0030091">
    <property type="term" value="P:protein repair"/>
    <property type="evidence" value="ECO:0007669"/>
    <property type="project" value="UniProtKB-UniRule"/>
</dbReference>
<dbReference type="HAMAP" id="MF_01207">
    <property type="entry name" value="MsrQ"/>
    <property type="match status" value="1"/>
</dbReference>
<dbReference type="InterPro" id="IPR013130">
    <property type="entry name" value="Fe3_Rdtase_TM_dom"/>
</dbReference>
<dbReference type="InterPro" id="IPR022837">
    <property type="entry name" value="MsrQ-like"/>
</dbReference>
<dbReference type="NCBIfam" id="NF003833">
    <property type="entry name" value="PRK05419.1-5"/>
    <property type="match status" value="1"/>
</dbReference>
<dbReference type="PANTHER" id="PTHR36964">
    <property type="entry name" value="PROTEIN-METHIONINE-SULFOXIDE REDUCTASE HEME-BINDING SUBUNIT MSRQ"/>
    <property type="match status" value="1"/>
</dbReference>
<dbReference type="PANTHER" id="PTHR36964:SF1">
    <property type="entry name" value="PROTEIN-METHIONINE-SULFOXIDE REDUCTASE HEME-BINDING SUBUNIT MSRQ"/>
    <property type="match status" value="1"/>
</dbReference>
<dbReference type="Pfam" id="PF01794">
    <property type="entry name" value="Ferric_reduct"/>
    <property type="match status" value="1"/>
</dbReference>
<evidence type="ECO:0000255" key="1">
    <source>
        <dbReference type="HAMAP-Rule" id="MF_01207"/>
    </source>
</evidence>
<sequence length="220" mass="24797">MAAATGTRKKKTPRPGQWKLWLLYTAGFVPAVWTFYLGATGQLGADPVKTFEHLLGLWALRFLILTLLVTPIRDLTGITLLRYRRALGLLAFYYALMHFTTYMVLDQGLNLSAIITDIVRRPFITIGMISLALLVPLALTSNNWSIRKLGRRWSSLHKLVYIAIAGSAVHFLMSVKSWPAEPVIYAAIVAALLLWRLARPYLRTRKPALRPRGEAIALRK</sequence>
<feature type="chain" id="PRO_1000085524" description="Protein-methionine-sulfoxide reductase heme-binding subunit MsrQ">
    <location>
        <begin position="1"/>
        <end position="220"/>
    </location>
</feature>
<feature type="transmembrane region" description="Helical" evidence="1">
    <location>
        <begin position="20"/>
        <end position="40"/>
    </location>
</feature>
<feature type="transmembrane region" description="Helical" evidence="1">
    <location>
        <begin position="52"/>
        <end position="72"/>
    </location>
</feature>
<feature type="transmembrane region" description="Helical" evidence="1">
    <location>
        <begin position="86"/>
        <end position="106"/>
    </location>
</feature>
<feature type="transmembrane region" description="Helical" evidence="1">
    <location>
        <begin position="122"/>
        <end position="142"/>
    </location>
</feature>
<feature type="transmembrane region" description="Helical" evidence="1">
    <location>
        <begin position="153"/>
        <end position="173"/>
    </location>
</feature>
<feature type="transmembrane region" description="Helical" evidence="1">
    <location>
        <begin position="175"/>
        <end position="195"/>
    </location>
</feature>
<protein>
    <recommendedName>
        <fullName evidence="1">Protein-methionine-sulfoxide reductase heme-binding subunit MsrQ</fullName>
    </recommendedName>
    <alternativeName>
        <fullName evidence="1">Flavocytochrome MsrQ</fullName>
    </alternativeName>
</protein>